<reference key="1">
    <citation type="submission" date="2004-11" db="EMBL/GenBank/DDBJ databases">
        <title>Oryza sativa japonica group 9-cis-epoxycarotenoid dioxygenase 1 (NCED1) mRNA.</title>
        <authorList>
            <person name="Dian W.M."/>
        </authorList>
    </citation>
    <scope>NUCLEOTIDE SEQUENCE [MRNA]</scope>
</reference>
<reference key="2">
    <citation type="journal article" date="2005" name="Nature">
        <title>The map-based sequence of the rice genome.</title>
        <authorList>
            <consortium name="International rice genome sequencing project (IRGSP)"/>
        </authorList>
    </citation>
    <scope>NUCLEOTIDE SEQUENCE [LARGE SCALE GENOMIC DNA]</scope>
    <source>
        <strain>cv. Nipponbare</strain>
    </source>
</reference>
<reference key="3">
    <citation type="journal article" date="2008" name="Nucleic Acids Res.">
        <title>The rice annotation project database (RAP-DB): 2008 update.</title>
        <authorList>
            <consortium name="The rice annotation project (RAP)"/>
        </authorList>
    </citation>
    <scope>GENOME REANNOTATION</scope>
    <source>
        <strain>cv. Nipponbare</strain>
    </source>
</reference>
<reference key="4">
    <citation type="journal article" date="2013" name="Rice">
        <title>Improvement of the Oryza sativa Nipponbare reference genome using next generation sequence and optical map data.</title>
        <authorList>
            <person name="Kawahara Y."/>
            <person name="de la Bastide M."/>
            <person name="Hamilton J.P."/>
            <person name="Kanamori H."/>
            <person name="McCombie W.R."/>
            <person name="Ouyang S."/>
            <person name="Schwartz D.C."/>
            <person name="Tanaka T."/>
            <person name="Wu J."/>
            <person name="Zhou S."/>
            <person name="Childs K.L."/>
            <person name="Davidson R.M."/>
            <person name="Lin H."/>
            <person name="Quesada-Ocampo L."/>
            <person name="Vaillancourt B."/>
            <person name="Sakai H."/>
            <person name="Lee S.S."/>
            <person name="Kim J."/>
            <person name="Numa H."/>
            <person name="Itoh T."/>
            <person name="Buell C.R."/>
            <person name="Matsumoto T."/>
        </authorList>
    </citation>
    <scope>GENOME REANNOTATION</scope>
    <source>
        <strain>cv. Nipponbare</strain>
    </source>
</reference>
<reference key="5">
    <citation type="journal article" date="2003" name="Science">
        <title>Collection, mapping, and annotation of over 28,000 cDNA clones from japonica rice.</title>
        <authorList>
            <consortium name="The rice full-length cDNA consortium"/>
        </authorList>
    </citation>
    <scope>NUCLEOTIDE SEQUENCE [LARGE SCALE MRNA]</scope>
    <source>
        <strain>cv. Nipponbare</strain>
    </source>
</reference>
<reference key="6">
    <citation type="journal article" date="2005" name="Plant Cell">
        <title>Functional isolation of novel nuclear proteins showing a variety of subnuclear localizations.</title>
        <authorList>
            <person name="Moriguchi K."/>
            <person name="Suzuki T."/>
            <person name="Ito Y."/>
            <person name="Yamazaki Y."/>
            <person name="Niwa Y."/>
            <person name="Kurata N."/>
        </authorList>
    </citation>
    <scope>NUCLEOTIDE SEQUENCE [MRNA] OF 1-323</scope>
    <source>
        <tissue>Panicle</tissue>
    </source>
</reference>
<reference key="7">
    <citation type="journal article" date="2007" name="Plant Cell Physiol.">
        <title>Ethylene promotes submergence-induced expression of OsABA8ox1, a gene that encodes ABA 8'-hydroxylase in rice.</title>
        <authorList>
            <person name="Saika H."/>
            <person name="Okamoto M."/>
            <person name="Miyoshi K."/>
            <person name="Kushiro T."/>
            <person name="Shinoda S."/>
            <person name="Jikumaru Y."/>
            <person name="Fujimoto M."/>
            <person name="Arikawa T."/>
            <person name="Takahashi H."/>
            <person name="Ando M."/>
            <person name="Arimura S."/>
            <person name="Miyao A."/>
            <person name="Hirochika H."/>
            <person name="Kamiya Y."/>
            <person name="Tsutsumi N."/>
            <person name="Nambara E."/>
            <person name="Nakazono M."/>
        </authorList>
    </citation>
    <scope>INDUCTION</scope>
</reference>
<reference key="8">
    <citation type="journal article" date="2009" name="Plant Cell Physiol.">
        <title>Glucose-induced delay of seed germination in rice is mediated by the suppression of ABA catabolism rather than an enhancement of ABA biosynthesis.</title>
        <authorList>
            <person name="Zhu G."/>
            <person name="Ye N."/>
            <person name="Zhang J."/>
        </authorList>
    </citation>
    <scope>INDUCTION BY GLUCOSE</scope>
</reference>
<reference key="9">
    <citation type="journal article" date="2015" name="Plant Cell Physiol.">
        <title>Reduced ABA accumulation in the root system is caused by ABA exudation in upland rice (Oryza sativa L. var. Gaoshan1) and this enhanced drought adaptation.</title>
        <authorList>
            <person name="Shi L."/>
            <person name="Guo M."/>
            <person name="Ye N."/>
            <person name="Liu Y."/>
            <person name="Liu R."/>
            <person name="Xia Y."/>
            <person name="Cui S."/>
            <person name="Zhang J."/>
        </authorList>
    </citation>
    <scope>INDUCTION BY DROUGHT STRESS</scope>
</reference>
<feature type="transit peptide" description="Chloroplast" evidence="2">
    <location>
        <begin position="1"/>
        <end position="80"/>
    </location>
</feature>
<feature type="chain" id="PRO_0000440937" description="9-cis-epoxycarotenoid dioxygenase NCED1, chloroplastic">
    <location>
        <begin position="81"/>
        <end position="638"/>
    </location>
</feature>
<feature type="region of interest" description="Disordered" evidence="3">
    <location>
        <begin position="28"/>
        <end position="80"/>
    </location>
</feature>
<feature type="region of interest" description="Disordered" evidence="3">
    <location>
        <begin position="92"/>
        <end position="113"/>
    </location>
</feature>
<feature type="compositionally biased region" description="Low complexity" evidence="3">
    <location>
        <begin position="28"/>
        <end position="37"/>
    </location>
</feature>
<feature type="compositionally biased region" description="Low complexity" evidence="3">
    <location>
        <begin position="44"/>
        <end position="69"/>
    </location>
</feature>
<feature type="compositionally biased region" description="Low complexity" evidence="3">
    <location>
        <begin position="92"/>
        <end position="102"/>
    </location>
</feature>
<feature type="binding site" evidence="1">
    <location>
        <position position="331"/>
    </location>
    <ligand>
        <name>Fe cation</name>
        <dbReference type="ChEBI" id="CHEBI:24875"/>
    </ligand>
</feature>
<feature type="binding site" evidence="1">
    <location>
        <position position="380"/>
    </location>
    <ligand>
        <name>Fe cation</name>
        <dbReference type="ChEBI" id="CHEBI:24875"/>
    </ligand>
</feature>
<feature type="binding site" evidence="1">
    <location>
        <position position="446"/>
    </location>
    <ligand>
        <name>Fe cation</name>
        <dbReference type="ChEBI" id="CHEBI:24875"/>
    </ligand>
</feature>
<feature type="binding site" evidence="1">
    <location>
        <position position="624"/>
    </location>
    <ligand>
        <name>Fe cation</name>
        <dbReference type="ChEBI" id="CHEBI:24875"/>
    </ligand>
</feature>
<comment type="function">
    <text evidence="1">Has a 11,12(11',12') 9-cis epoxycarotenoid cleavage activity. Catalyzes the first step of abscisic-acid biosynthesis from carotenoids.</text>
</comment>
<comment type="catalytic activity">
    <reaction evidence="1">
        <text>a 9-cis-epoxycarotenoid + O2 = a 12'-apo-carotenal + 2-cis,4-trans-xanthoxin</text>
        <dbReference type="Rhea" id="RHEA:23328"/>
        <dbReference type="ChEBI" id="CHEBI:15379"/>
        <dbReference type="ChEBI" id="CHEBI:32304"/>
        <dbReference type="ChEBI" id="CHEBI:51972"/>
        <dbReference type="ChEBI" id="CHEBI:51973"/>
        <dbReference type="EC" id="1.13.11.51"/>
    </reaction>
</comment>
<comment type="catalytic activity">
    <reaction evidence="1">
        <text>9-cis-violaxanthin + O2 = (3S,5R,6S)-5,6-epoxy-3-hydroxy-5,6-dihydro-12'-apo-beta-caroten-12'-al + 2-cis,4-trans-xanthoxin</text>
        <dbReference type="Rhea" id="RHEA:16541"/>
        <dbReference type="ChEBI" id="CHEBI:15379"/>
        <dbReference type="ChEBI" id="CHEBI:32304"/>
        <dbReference type="ChEBI" id="CHEBI:34597"/>
        <dbReference type="ChEBI" id="CHEBI:35305"/>
        <dbReference type="EC" id="1.13.11.51"/>
    </reaction>
</comment>
<comment type="catalytic activity">
    <reaction evidence="1">
        <text>9'-cis-neoxanthin + O2 = (3S,5R,6R)-3,5-dihydroxy-6,7-didehydro-5,6-dihydro-12'-apo-beta-caroten-12'-al + 2-cis,4-trans-xanthoxin</text>
        <dbReference type="Rhea" id="RHEA:19677"/>
        <dbReference type="ChEBI" id="CHEBI:15379"/>
        <dbReference type="ChEBI" id="CHEBI:32304"/>
        <dbReference type="ChEBI" id="CHEBI:34596"/>
        <dbReference type="ChEBI" id="CHEBI:35306"/>
        <dbReference type="EC" id="1.13.11.51"/>
    </reaction>
</comment>
<comment type="cofactor">
    <cofactor evidence="1">
        <name>Fe(2+)</name>
        <dbReference type="ChEBI" id="CHEBI:29033"/>
    </cofactor>
    <text evidence="1">Binds 1 Fe(2+) ion per subunit.</text>
</comment>
<comment type="subcellular location">
    <subcellularLocation>
        <location evidence="2">Plastid</location>
        <location evidence="2">Chloroplast</location>
    </subcellularLocation>
</comment>
<comment type="induction">
    <text evidence="4 5 6">Induced by glucose (PubMed:19208695). Induced by drought stress (PubMed:25735958). Down-regulated by submergence (PubMed:17205969).</text>
</comment>
<comment type="similarity">
    <text evidence="7">Belongs to the carotenoid oxygenase family.</text>
</comment>
<keyword id="KW-0937">Abscisic acid biosynthesis</keyword>
<keyword id="KW-0150">Chloroplast</keyword>
<keyword id="KW-0223">Dioxygenase</keyword>
<keyword id="KW-0408">Iron</keyword>
<keyword id="KW-0479">Metal-binding</keyword>
<keyword id="KW-0560">Oxidoreductase</keyword>
<keyword id="KW-0934">Plastid</keyword>
<keyword id="KW-1185">Reference proteome</keyword>
<keyword id="KW-0346">Stress response</keyword>
<keyword id="KW-0809">Transit peptide</keyword>
<organism>
    <name type="scientific">Oryza sativa subsp. japonica</name>
    <name type="common">Rice</name>
    <dbReference type="NCBI Taxonomy" id="39947"/>
    <lineage>
        <taxon>Eukaryota</taxon>
        <taxon>Viridiplantae</taxon>
        <taxon>Streptophyta</taxon>
        <taxon>Embryophyta</taxon>
        <taxon>Tracheophyta</taxon>
        <taxon>Spermatophyta</taxon>
        <taxon>Magnoliopsida</taxon>
        <taxon>Liliopsida</taxon>
        <taxon>Poales</taxon>
        <taxon>Poaceae</taxon>
        <taxon>BOP clade</taxon>
        <taxon>Oryzoideae</taxon>
        <taxon>Oryzeae</taxon>
        <taxon>Oryzinae</taxon>
        <taxon>Oryza</taxon>
        <taxon>Oryza sativa</taxon>
    </lineage>
</organism>
<gene>
    <name evidence="8" type="primary">NCED1</name>
    <name evidence="10" type="ordered locus">Os02g0704000</name>
    <name evidence="7" type="ordered locus">LOC_Os02g47510</name>
    <name evidence="9" type="ORF">P0724B10.24</name>
</gene>
<sequence length="638" mass="68620">MQRICPAHCSVTHSLTMKSMRLSYIPPAASAAPQSPSYGRKKNASAAPPSAAASTTVLTSPLVTTTRTPKQTEQEDEQLVAKTKTTRTVIATTNGRAAPSQSRPRRRPAPAAAASAASLPMTFCNALEEVINTFIDPPALRPAVDPRNVLTSNFVPVDELPPTPCPVVRGAIPRCLAGGAYIRNGPNPQHLPRGPHHLFDGDGMLHSLLLPSPASSGDDPVLCSRYVQTYKYLVERDAGAPVLPNVFSGFHGVAGMARGAVVAARVLTGQMNPLEGVGLANTSLAYFAGRLYALGESDLPYAVRVHPDTGEVTTHGRCDFGGRLVMGMTAHPKKDPVTGELFAFRYGPVPPFVTYFRFDPAGNKGADVPIFSVQQPSFLHDFAITERYAIFPEIQIVMKPMDMVVGGGSPVGSDPGKVPRLGVIPRYATDESEMRWFEVPGFNIMHSVNAWEEAGGEELVLVAPNVLSIEHALEHMELVHSCVEKVRINLRTGVVTRTPLAAGNFDFPVINPAFLGRRNRYGYFGVGDPAPKIGGVAKLDFDRAGEGDCTVAQRDFGPGCFAGEPFFVADDVEGNGNEDDGYLVCYVHDEATGENRFVVMDARSPDLEIVAEVQLPGRVPYGFHGLFVTQAELQSQHQ</sequence>
<proteinExistence type="evidence at transcript level"/>
<dbReference type="EC" id="1.13.11.51" evidence="1"/>
<dbReference type="EMBL" id="AY838897">
    <property type="protein sequence ID" value="AAW21317.1"/>
    <property type="molecule type" value="mRNA"/>
</dbReference>
<dbReference type="EMBL" id="AP005825">
    <property type="protein sequence ID" value="BAD08075.1"/>
    <property type="molecule type" value="Genomic_DNA"/>
</dbReference>
<dbReference type="EMBL" id="AP008208">
    <property type="protein sequence ID" value="BAF09772.1"/>
    <property type="molecule type" value="Genomic_DNA"/>
</dbReference>
<dbReference type="EMBL" id="AP014958">
    <property type="protein sequence ID" value="BAS80498.1"/>
    <property type="molecule type" value="Genomic_DNA"/>
</dbReference>
<dbReference type="EMBL" id="AK099580">
    <property type="protein sequence ID" value="BAG94205.1"/>
    <property type="molecule type" value="mRNA"/>
</dbReference>
<dbReference type="EMBL" id="AB110203">
    <property type="protein sequence ID" value="BAC78595.1"/>
    <property type="molecule type" value="mRNA"/>
</dbReference>
<dbReference type="SMR" id="Q6YVJ0"/>
<dbReference type="FunCoup" id="Q6YVJ0">
    <property type="interactions" value="157"/>
</dbReference>
<dbReference type="STRING" id="39947.Q6YVJ0"/>
<dbReference type="PaxDb" id="39947-Q6YVJ0"/>
<dbReference type="EnsemblPlants" id="Os02t0704000-01">
    <property type="protein sequence ID" value="Os02t0704000-01"/>
    <property type="gene ID" value="Os02g0704000"/>
</dbReference>
<dbReference type="GeneID" id="4330451"/>
<dbReference type="Gramene" id="Os02t0704000-01">
    <property type="protein sequence ID" value="Os02t0704000-01"/>
    <property type="gene ID" value="Os02g0704000"/>
</dbReference>
<dbReference type="KEGG" id="dosa:Os02g0704000"/>
<dbReference type="KEGG" id="osa:4330451"/>
<dbReference type="eggNOG" id="KOG1285">
    <property type="taxonomic scope" value="Eukaryota"/>
</dbReference>
<dbReference type="HOGENOM" id="CLU_016472_0_0_1"/>
<dbReference type="InParanoid" id="Q6YVJ0"/>
<dbReference type="OMA" id="KTEECWY"/>
<dbReference type="OrthoDB" id="1069523at2759"/>
<dbReference type="Proteomes" id="UP000000763">
    <property type="component" value="Chromosome 2"/>
</dbReference>
<dbReference type="Proteomes" id="UP000059680">
    <property type="component" value="Chromosome 2"/>
</dbReference>
<dbReference type="GO" id="GO:0009570">
    <property type="term" value="C:chloroplast stroma"/>
    <property type="evidence" value="ECO:0000318"/>
    <property type="project" value="GO_Central"/>
</dbReference>
<dbReference type="GO" id="GO:0045549">
    <property type="term" value="F:9-cis-epoxycarotenoid dioxygenase activity"/>
    <property type="evidence" value="ECO:0007669"/>
    <property type="project" value="UniProtKB-EC"/>
</dbReference>
<dbReference type="GO" id="GO:0010436">
    <property type="term" value="F:carotenoid dioxygenase activity"/>
    <property type="evidence" value="ECO:0000318"/>
    <property type="project" value="GO_Central"/>
</dbReference>
<dbReference type="GO" id="GO:0046872">
    <property type="term" value="F:metal ion binding"/>
    <property type="evidence" value="ECO:0007669"/>
    <property type="project" value="UniProtKB-KW"/>
</dbReference>
<dbReference type="GO" id="GO:0009688">
    <property type="term" value="P:abscisic acid biosynthetic process"/>
    <property type="evidence" value="ECO:0007669"/>
    <property type="project" value="UniProtKB-KW"/>
</dbReference>
<dbReference type="GO" id="GO:0016121">
    <property type="term" value="P:carotene catabolic process"/>
    <property type="evidence" value="ECO:0000318"/>
    <property type="project" value="GO_Central"/>
</dbReference>
<dbReference type="InterPro" id="IPR004294">
    <property type="entry name" value="Carotenoid_Oase"/>
</dbReference>
<dbReference type="PANTHER" id="PTHR10543">
    <property type="entry name" value="BETA-CAROTENE DIOXYGENASE"/>
    <property type="match status" value="1"/>
</dbReference>
<dbReference type="PANTHER" id="PTHR10543:SF46">
    <property type="entry name" value="CAROTENOID CLEAVAGE DIOXYGENASE 4, CHLOROPLASTIC-RELATED"/>
    <property type="match status" value="1"/>
</dbReference>
<dbReference type="Pfam" id="PF03055">
    <property type="entry name" value="RPE65"/>
    <property type="match status" value="1"/>
</dbReference>
<protein>
    <recommendedName>
        <fullName evidence="7">9-cis-epoxycarotenoid dioxygenase NCED1, chloroplastic</fullName>
        <shortName evidence="8">OsNCED1</shortName>
        <ecNumber evidence="1">1.13.11.51</ecNumber>
    </recommendedName>
</protein>
<evidence type="ECO:0000250" key="1">
    <source>
        <dbReference type="UniProtKB" id="O24592"/>
    </source>
</evidence>
<evidence type="ECO:0000255" key="2"/>
<evidence type="ECO:0000256" key="3">
    <source>
        <dbReference type="SAM" id="MobiDB-lite"/>
    </source>
</evidence>
<evidence type="ECO:0000269" key="4">
    <source>
    </source>
</evidence>
<evidence type="ECO:0000269" key="5">
    <source>
    </source>
</evidence>
<evidence type="ECO:0000269" key="6">
    <source>
    </source>
</evidence>
<evidence type="ECO:0000305" key="7"/>
<evidence type="ECO:0000312" key="8">
    <source>
        <dbReference type="EMBL" id="AAW21317.1"/>
    </source>
</evidence>
<evidence type="ECO:0000312" key="9">
    <source>
        <dbReference type="EMBL" id="BAD08075.1"/>
    </source>
</evidence>
<evidence type="ECO:0000312" key="10">
    <source>
        <dbReference type="EMBL" id="BAF09772.1"/>
    </source>
</evidence>
<name>NCED1_ORYSJ</name>
<accession>Q6YVJ0</accession>
<accession>Q7XXP8</accession>